<proteinExistence type="inferred from homology"/>
<sequence>MTASSGTPPHQTVERARELREQLGTAQHEYYVLDRPTLSDQEYDRLFRELQGIEAEYPTLCTEDSPTRRVGAPVQSAFSPHRHLVRMLSLDNAFDLSELEDFEQSLKRVVGDAIHTSGYTVELKIDGAAVALTYREGVLVTAATRGDGTDGEDVTANVRTIRGVPLRLHGDNHPPLMEVRGEVYLPFAGFERMNEARVAAGEPVYVNPRNAAAGSMRQLDSANTAARPLRFFGYAAVLPDGSAPARSQWELLEQLSAWGVPVAPHRQRCHTIQEAEAWATVVEHETRATLGFAIDGGVVKVNDMALQDELGIRADRTPRWGVARKFAPDMALTKLRRIDVNVGRTGVLTPFAVLEPVDVGGATVTFASLHNADQIAAKDLREGDTVQVVRAGDVIPYVLGPVPEQRDGSQQPWSMPTQCPRCNTPVERYGDDVAVYCPNVACPGRQLEGLVHFSSKDALDIDGLSYARIQQLLDAGLVHDVADLFDITVDQLTSLERFAKKSAENLVAAIAAAKQQPLSRLMFGLGIRHVGAQAAQLLSRQYGSLDALMNATAEQLGAVRGIGSIIAQSVASYFADPTTRALMERLRARGLRFDEPNAVQADGVLTGATVVLTGTLPSLSRGEATALVEQAGGRVTSSVSKKTTFVVAGEEAGSKLDKAKELGVTVLTEAELLEKLSGASADASADASA</sequence>
<dbReference type="EC" id="6.5.1.2" evidence="1"/>
<dbReference type="EMBL" id="AP009153">
    <property type="protein sequence ID" value="BAH37832.1"/>
    <property type="molecule type" value="Genomic_DNA"/>
</dbReference>
<dbReference type="RefSeq" id="WP_012682279.1">
    <property type="nucleotide sequence ID" value="NC_012489.1"/>
</dbReference>
<dbReference type="SMR" id="C1A6H2"/>
<dbReference type="STRING" id="379066.GAU_0790"/>
<dbReference type="KEGG" id="gau:GAU_0790"/>
<dbReference type="eggNOG" id="COG0272">
    <property type="taxonomic scope" value="Bacteria"/>
</dbReference>
<dbReference type="HOGENOM" id="CLU_007764_2_1_0"/>
<dbReference type="OrthoDB" id="9759736at2"/>
<dbReference type="Proteomes" id="UP000002209">
    <property type="component" value="Chromosome"/>
</dbReference>
<dbReference type="GO" id="GO:0005829">
    <property type="term" value="C:cytosol"/>
    <property type="evidence" value="ECO:0007669"/>
    <property type="project" value="TreeGrafter"/>
</dbReference>
<dbReference type="GO" id="GO:0003677">
    <property type="term" value="F:DNA binding"/>
    <property type="evidence" value="ECO:0007669"/>
    <property type="project" value="InterPro"/>
</dbReference>
<dbReference type="GO" id="GO:0003911">
    <property type="term" value="F:DNA ligase (NAD+) activity"/>
    <property type="evidence" value="ECO:0007669"/>
    <property type="project" value="UniProtKB-UniRule"/>
</dbReference>
<dbReference type="GO" id="GO:0046872">
    <property type="term" value="F:metal ion binding"/>
    <property type="evidence" value="ECO:0007669"/>
    <property type="project" value="UniProtKB-KW"/>
</dbReference>
<dbReference type="GO" id="GO:0006281">
    <property type="term" value="P:DNA repair"/>
    <property type="evidence" value="ECO:0007669"/>
    <property type="project" value="UniProtKB-KW"/>
</dbReference>
<dbReference type="GO" id="GO:0006260">
    <property type="term" value="P:DNA replication"/>
    <property type="evidence" value="ECO:0007669"/>
    <property type="project" value="UniProtKB-KW"/>
</dbReference>
<dbReference type="CDD" id="cd17748">
    <property type="entry name" value="BRCT_DNA_ligase_like"/>
    <property type="match status" value="1"/>
</dbReference>
<dbReference type="CDD" id="cd00114">
    <property type="entry name" value="LIGANc"/>
    <property type="match status" value="1"/>
</dbReference>
<dbReference type="FunFam" id="1.10.150.20:FF:000006">
    <property type="entry name" value="DNA ligase"/>
    <property type="match status" value="1"/>
</dbReference>
<dbReference type="FunFam" id="1.10.150.20:FF:000007">
    <property type="entry name" value="DNA ligase"/>
    <property type="match status" value="1"/>
</dbReference>
<dbReference type="FunFam" id="3.30.470.30:FF:000001">
    <property type="entry name" value="DNA ligase"/>
    <property type="match status" value="1"/>
</dbReference>
<dbReference type="Gene3D" id="6.20.10.30">
    <property type="match status" value="1"/>
</dbReference>
<dbReference type="Gene3D" id="1.10.150.20">
    <property type="entry name" value="5' to 3' exonuclease, C-terminal subdomain"/>
    <property type="match status" value="2"/>
</dbReference>
<dbReference type="Gene3D" id="3.40.50.10190">
    <property type="entry name" value="BRCT domain"/>
    <property type="match status" value="1"/>
</dbReference>
<dbReference type="Gene3D" id="3.30.470.30">
    <property type="entry name" value="DNA ligase/mRNA capping enzyme"/>
    <property type="match status" value="1"/>
</dbReference>
<dbReference type="Gene3D" id="1.10.287.610">
    <property type="entry name" value="Helix hairpin bin"/>
    <property type="match status" value="1"/>
</dbReference>
<dbReference type="Gene3D" id="2.40.50.140">
    <property type="entry name" value="Nucleic acid-binding proteins"/>
    <property type="match status" value="1"/>
</dbReference>
<dbReference type="HAMAP" id="MF_01588">
    <property type="entry name" value="DNA_ligase_A"/>
    <property type="match status" value="1"/>
</dbReference>
<dbReference type="InterPro" id="IPR001357">
    <property type="entry name" value="BRCT_dom"/>
</dbReference>
<dbReference type="InterPro" id="IPR036420">
    <property type="entry name" value="BRCT_dom_sf"/>
</dbReference>
<dbReference type="InterPro" id="IPR041663">
    <property type="entry name" value="DisA/LigA_HHH"/>
</dbReference>
<dbReference type="InterPro" id="IPR001679">
    <property type="entry name" value="DNA_ligase"/>
</dbReference>
<dbReference type="InterPro" id="IPR018239">
    <property type="entry name" value="DNA_ligase_AS"/>
</dbReference>
<dbReference type="InterPro" id="IPR033136">
    <property type="entry name" value="DNA_ligase_CS"/>
</dbReference>
<dbReference type="InterPro" id="IPR013839">
    <property type="entry name" value="DNAligase_adenylation"/>
</dbReference>
<dbReference type="InterPro" id="IPR013840">
    <property type="entry name" value="DNAligase_N"/>
</dbReference>
<dbReference type="InterPro" id="IPR003583">
    <property type="entry name" value="Hlx-hairpin-Hlx_DNA-bd_motif"/>
</dbReference>
<dbReference type="InterPro" id="IPR012340">
    <property type="entry name" value="NA-bd_OB-fold"/>
</dbReference>
<dbReference type="InterPro" id="IPR004150">
    <property type="entry name" value="NAD_DNA_ligase_OB"/>
</dbReference>
<dbReference type="InterPro" id="IPR010994">
    <property type="entry name" value="RuvA_2-like"/>
</dbReference>
<dbReference type="InterPro" id="IPR004149">
    <property type="entry name" value="Znf_DNAligase_C4"/>
</dbReference>
<dbReference type="NCBIfam" id="TIGR00575">
    <property type="entry name" value="dnlj"/>
    <property type="match status" value="1"/>
</dbReference>
<dbReference type="NCBIfam" id="NF005932">
    <property type="entry name" value="PRK07956.1"/>
    <property type="match status" value="1"/>
</dbReference>
<dbReference type="PANTHER" id="PTHR23389">
    <property type="entry name" value="CHROMOSOME TRANSMISSION FIDELITY FACTOR 18"/>
    <property type="match status" value="1"/>
</dbReference>
<dbReference type="PANTHER" id="PTHR23389:SF9">
    <property type="entry name" value="DNA LIGASE"/>
    <property type="match status" value="1"/>
</dbReference>
<dbReference type="Pfam" id="PF00533">
    <property type="entry name" value="BRCT"/>
    <property type="match status" value="1"/>
</dbReference>
<dbReference type="Pfam" id="PF01653">
    <property type="entry name" value="DNA_ligase_aden"/>
    <property type="match status" value="1"/>
</dbReference>
<dbReference type="Pfam" id="PF03120">
    <property type="entry name" value="DNA_ligase_OB"/>
    <property type="match status" value="1"/>
</dbReference>
<dbReference type="Pfam" id="PF03119">
    <property type="entry name" value="DNA_ligase_ZBD"/>
    <property type="match status" value="1"/>
</dbReference>
<dbReference type="Pfam" id="PF12826">
    <property type="entry name" value="HHH_2"/>
    <property type="match status" value="1"/>
</dbReference>
<dbReference type="Pfam" id="PF14520">
    <property type="entry name" value="HHH_5"/>
    <property type="match status" value="1"/>
</dbReference>
<dbReference type="Pfam" id="PF22745">
    <property type="entry name" value="Nlig-Ia"/>
    <property type="match status" value="1"/>
</dbReference>
<dbReference type="PIRSF" id="PIRSF001604">
    <property type="entry name" value="LigA"/>
    <property type="match status" value="1"/>
</dbReference>
<dbReference type="SMART" id="SM00292">
    <property type="entry name" value="BRCT"/>
    <property type="match status" value="1"/>
</dbReference>
<dbReference type="SMART" id="SM00278">
    <property type="entry name" value="HhH1"/>
    <property type="match status" value="3"/>
</dbReference>
<dbReference type="SMART" id="SM00532">
    <property type="entry name" value="LIGANc"/>
    <property type="match status" value="1"/>
</dbReference>
<dbReference type="SUPFAM" id="SSF52113">
    <property type="entry name" value="BRCT domain"/>
    <property type="match status" value="1"/>
</dbReference>
<dbReference type="SUPFAM" id="SSF56091">
    <property type="entry name" value="DNA ligase/mRNA capping enzyme, catalytic domain"/>
    <property type="match status" value="1"/>
</dbReference>
<dbReference type="SUPFAM" id="SSF50249">
    <property type="entry name" value="Nucleic acid-binding proteins"/>
    <property type="match status" value="1"/>
</dbReference>
<dbReference type="SUPFAM" id="SSF47781">
    <property type="entry name" value="RuvA domain 2-like"/>
    <property type="match status" value="1"/>
</dbReference>
<dbReference type="PROSITE" id="PS50172">
    <property type="entry name" value="BRCT"/>
    <property type="match status" value="1"/>
</dbReference>
<dbReference type="PROSITE" id="PS01055">
    <property type="entry name" value="DNA_LIGASE_N1"/>
    <property type="match status" value="1"/>
</dbReference>
<dbReference type="PROSITE" id="PS01056">
    <property type="entry name" value="DNA_LIGASE_N2"/>
    <property type="match status" value="1"/>
</dbReference>
<comment type="function">
    <text evidence="1">DNA ligase that catalyzes the formation of phosphodiester linkages between 5'-phosphoryl and 3'-hydroxyl groups in double-stranded DNA using NAD as a coenzyme and as the energy source for the reaction. It is essential for DNA replication and repair of damaged DNA.</text>
</comment>
<comment type="catalytic activity">
    <reaction evidence="1">
        <text>NAD(+) + (deoxyribonucleotide)n-3'-hydroxyl + 5'-phospho-(deoxyribonucleotide)m = (deoxyribonucleotide)n+m + AMP + beta-nicotinamide D-nucleotide.</text>
        <dbReference type="EC" id="6.5.1.2"/>
    </reaction>
</comment>
<comment type="cofactor">
    <cofactor evidence="1">
        <name>Mg(2+)</name>
        <dbReference type="ChEBI" id="CHEBI:18420"/>
    </cofactor>
    <cofactor evidence="1">
        <name>Mn(2+)</name>
        <dbReference type="ChEBI" id="CHEBI:29035"/>
    </cofactor>
</comment>
<comment type="similarity">
    <text evidence="1">Belongs to the NAD-dependent DNA ligase family. LigA subfamily.</text>
</comment>
<protein>
    <recommendedName>
        <fullName evidence="1">DNA ligase</fullName>
        <ecNumber evidence="1">6.5.1.2</ecNumber>
    </recommendedName>
    <alternativeName>
        <fullName evidence="1">Polydeoxyribonucleotide synthase [NAD(+)]</fullName>
    </alternativeName>
</protein>
<organism>
    <name type="scientific">Gemmatimonas aurantiaca (strain DSM 14586 / JCM 11422 / NBRC 100505 / T-27)</name>
    <dbReference type="NCBI Taxonomy" id="379066"/>
    <lineage>
        <taxon>Bacteria</taxon>
        <taxon>Pseudomonadati</taxon>
        <taxon>Gemmatimonadota</taxon>
        <taxon>Gemmatimonadia</taxon>
        <taxon>Gemmatimonadales</taxon>
        <taxon>Gemmatimonadaceae</taxon>
        <taxon>Gemmatimonas</taxon>
    </lineage>
</organism>
<name>DNLJ_GEMAT</name>
<keyword id="KW-0227">DNA damage</keyword>
<keyword id="KW-0234">DNA repair</keyword>
<keyword id="KW-0235">DNA replication</keyword>
<keyword id="KW-0436">Ligase</keyword>
<keyword id="KW-0460">Magnesium</keyword>
<keyword id="KW-0464">Manganese</keyword>
<keyword id="KW-0479">Metal-binding</keyword>
<keyword id="KW-0520">NAD</keyword>
<keyword id="KW-1185">Reference proteome</keyword>
<keyword id="KW-0862">Zinc</keyword>
<evidence type="ECO:0000255" key="1">
    <source>
        <dbReference type="HAMAP-Rule" id="MF_01588"/>
    </source>
</evidence>
<feature type="chain" id="PRO_0000380387" description="DNA ligase">
    <location>
        <begin position="1"/>
        <end position="689"/>
    </location>
</feature>
<feature type="domain" description="BRCT" evidence="1">
    <location>
        <begin position="600"/>
        <end position="689"/>
    </location>
</feature>
<feature type="active site" description="N6-AMP-lysine intermediate" evidence="1">
    <location>
        <position position="124"/>
    </location>
</feature>
<feature type="binding site" evidence="1">
    <location>
        <begin position="40"/>
        <end position="44"/>
    </location>
    <ligand>
        <name>NAD(+)</name>
        <dbReference type="ChEBI" id="CHEBI:57540"/>
    </ligand>
</feature>
<feature type="binding site" evidence="1">
    <location>
        <begin position="89"/>
        <end position="90"/>
    </location>
    <ligand>
        <name>NAD(+)</name>
        <dbReference type="ChEBI" id="CHEBI:57540"/>
    </ligand>
</feature>
<feature type="binding site" evidence="1">
    <location>
        <position position="122"/>
    </location>
    <ligand>
        <name>NAD(+)</name>
        <dbReference type="ChEBI" id="CHEBI:57540"/>
    </ligand>
</feature>
<feature type="binding site" evidence="1">
    <location>
        <position position="145"/>
    </location>
    <ligand>
        <name>NAD(+)</name>
        <dbReference type="ChEBI" id="CHEBI:57540"/>
    </ligand>
</feature>
<feature type="binding site" evidence="1">
    <location>
        <position position="182"/>
    </location>
    <ligand>
        <name>NAD(+)</name>
        <dbReference type="ChEBI" id="CHEBI:57540"/>
    </ligand>
</feature>
<feature type="binding site" evidence="1">
    <location>
        <position position="300"/>
    </location>
    <ligand>
        <name>NAD(+)</name>
        <dbReference type="ChEBI" id="CHEBI:57540"/>
    </ligand>
</feature>
<feature type="binding site" evidence="1">
    <location>
        <position position="325"/>
    </location>
    <ligand>
        <name>NAD(+)</name>
        <dbReference type="ChEBI" id="CHEBI:57540"/>
    </ligand>
</feature>
<feature type="binding site" evidence="1">
    <location>
        <position position="419"/>
    </location>
    <ligand>
        <name>Zn(2+)</name>
        <dbReference type="ChEBI" id="CHEBI:29105"/>
    </ligand>
</feature>
<feature type="binding site" evidence="1">
    <location>
        <position position="422"/>
    </location>
    <ligand>
        <name>Zn(2+)</name>
        <dbReference type="ChEBI" id="CHEBI:29105"/>
    </ligand>
</feature>
<feature type="binding site" evidence="1">
    <location>
        <position position="437"/>
    </location>
    <ligand>
        <name>Zn(2+)</name>
        <dbReference type="ChEBI" id="CHEBI:29105"/>
    </ligand>
</feature>
<feature type="binding site" evidence="1">
    <location>
        <position position="442"/>
    </location>
    <ligand>
        <name>Zn(2+)</name>
        <dbReference type="ChEBI" id="CHEBI:29105"/>
    </ligand>
</feature>
<accession>C1A6H2</accession>
<reference key="1">
    <citation type="submission" date="2006-03" db="EMBL/GenBank/DDBJ databases">
        <title>Complete genome sequence of Gemmatimonas aurantiaca T-27 that represents a novel phylum Gemmatimonadetes.</title>
        <authorList>
            <person name="Takasaki K."/>
            <person name="Ichikawa N."/>
            <person name="Miura H."/>
            <person name="Matsushita S."/>
            <person name="Watanabe Y."/>
            <person name="Oguchi A."/>
            <person name="Ankai A."/>
            <person name="Yashiro I."/>
            <person name="Takahashi M."/>
            <person name="Terui Y."/>
            <person name="Fukui S."/>
            <person name="Yokoyama H."/>
            <person name="Tanikawa S."/>
            <person name="Hanada S."/>
            <person name="Kamagata Y."/>
            <person name="Fujita N."/>
        </authorList>
    </citation>
    <scope>NUCLEOTIDE SEQUENCE [LARGE SCALE GENOMIC DNA]</scope>
    <source>
        <strain>DSM 14586 / JCM 11422 / NBRC 100505 / T-27</strain>
    </source>
</reference>
<gene>
    <name evidence="1" type="primary">ligA</name>
    <name type="ordered locus">GAU_0790</name>
</gene>